<accession>Q7VND8</accession>
<proteinExistence type="inferred from homology"/>
<feature type="chain" id="PRO_0000208963" description="Ribonuclease T">
    <location>
        <begin position="1"/>
        <end position="214"/>
    </location>
</feature>
<feature type="domain" description="Exonuclease" evidence="1">
    <location>
        <begin position="21"/>
        <end position="195"/>
    </location>
</feature>
<feature type="active site" description="Proton donor/acceptor" evidence="1">
    <location>
        <position position="182"/>
    </location>
</feature>
<feature type="binding site" evidence="1">
    <location>
        <position position="24"/>
    </location>
    <ligand>
        <name>Mg(2+)</name>
        <dbReference type="ChEBI" id="CHEBI:18420"/>
        <label>1</label>
        <note>catalytic</note>
    </ligand>
</feature>
<feature type="binding site" evidence="1">
    <location>
        <position position="24"/>
    </location>
    <ligand>
        <name>Mg(2+)</name>
        <dbReference type="ChEBI" id="CHEBI:18420"/>
        <label>2</label>
        <note>catalytic</note>
    </ligand>
</feature>
<feature type="binding site" evidence="1">
    <location>
        <position position="26"/>
    </location>
    <ligand>
        <name>Mg(2+)</name>
        <dbReference type="ChEBI" id="CHEBI:18420"/>
        <label>2</label>
        <note>catalytic</note>
    </ligand>
</feature>
<feature type="binding site" evidence="1">
    <location>
        <position position="182"/>
    </location>
    <ligand>
        <name>Mg(2+)</name>
        <dbReference type="ChEBI" id="CHEBI:18420"/>
        <label>2</label>
        <note>catalytic</note>
    </ligand>
</feature>
<feature type="binding site" evidence="1">
    <location>
        <position position="187"/>
    </location>
    <ligand>
        <name>Mg(2+)</name>
        <dbReference type="ChEBI" id="CHEBI:18420"/>
        <label>2</label>
        <note>catalytic</note>
    </ligand>
</feature>
<feature type="site" description="Important for substrate binding and specificity" evidence="1">
    <location>
        <position position="78"/>
    </location>
</feature>
<feature type="site" description="Important for substrate binding and specificity" evidence="1">
    <location>
        <position position="125"/>
    </location>
</feature>
<feature type="site" description="Important for substrate binding and specificity" evidence="1">
    <location>
        <position position="147"/>
    </location>
</feature>
<dbReference type="EC" id="3.1.13.-" evidence="1"/>
<dbReference type="EMBL" id="AE017143">
    <property type="protein sequence ID" value="AAP95541.1"/>
    <property type="molecule type" value="Genomic_DNA"/>
</dbReference>
<dbReference type="RefSeq" id="WP_010944594.1">
    <property type="nucleotide sequence ID" value="NC_002940.2"/>
</dbReference>
<dbReference type="SMR" id="Q7VND8"/>
<dbReference type="STRING" id="233412.HD_0611"/>
<dbReference type="KEGG" id="hdu:HD_0611"/>
<dbReference type="eggNOG" id="COG0847">
    <property type="taxonomic scope" value="Bacteria"/>
</dbReference>
<dbReference type="HOGENOM" id="CLU_082724_0_0_6"/>
<dbReference type="OrthoDB" id="9778264at2"/>
<dbReference type="Proteomes" id="UP000001022">
    <property type="component" value="Chromosome"/>
</dbReference>
<dbReference type="GO" id="GO:0005829">
    <property type="term" value="C:cytosol"/>
    <property type="evidence" value="ECO:0007669"/>
    <property type="project" value="TreeGrafter"/>
</dbReference>
<dbReference type="GO" id="GO:0008408">
    <property type="term" value="F:3'-5' exonuclease activity"/>
    <property type="evidence" value="ECO:0007669"/>
    <property type="project" value="TreeGrafter"/>
</dbReference>
<dbReference type="GO" id="GO:0000287">
    <property type="term" value="F:magnesium ion binding"/>
    <property type="evidence" value="ECO:0007669"/>
    <property type="project" value="UniProtKB-UniRule"/>
</dbReference>
<dbReference type="GO" id="GO:0003676">
    <property type="term" value="F:nucleic acid binding"/>
    <property type="evidence" value="ECO:0007669"/>
    <property type="project" value="InterPro"/>
</dbReference>
<dbReference type="GO" id="GO:0016896">
    <property type="term" value="F:RNA exonuclease activity, producing 5'-phosphomonoesters"/>
    <property type="evidence" value="ECO:0007669"/>
    <property type="project" value="UniProtKB-UniRule"/>
</dbReference>
<dbReference type="GO" id="GO:0045004">
    <property type="term" value="P:DNA replication proofreading"/>
    <property type="evidence" value="ECO:0007669"/>
    <property type="project" value="TreeGrafter"/>
</dbReference>
<dbReference type="GO" id="GO:0008033">
    <property type="term" value="P:tRNA processing"/>
    <property type="evidence" value="ECO:0007669"/>
    <property type="project" value="UniProtKB-KW"/>
</dbReference>
<dbReference type="FunFam" id="3.30.420.10:FF:000009">
    <property type="entry name" value="Ribonuclease T"/>
    <property type="match status" value="1"/>
</dbReference>
<dbReference type="Gene3D" id="3.30.420.10">
    <property type="entry name" value="Ribonuclease H-like superfamily/Ribonuclease H"/>
    <property type="match status" value="1"/>
</dbReference>
<dbReference type="HAMAP" id="MF_00157">
    <property type="entry name" value="RNase_T"/>
    <property type="match status" value="1"/>
</dbReference>
<dbReference type="InterPro" id="IPR013520">
    <property type="entry name" value="Exonuclease_RNaseT/DNA_pol3"/>
</dbReference>
<dbReference type="InterPro" id="IPR005987">
    <property type="entry name" value="RNase_T"/>
</dbReference>
<dbReference type="InterPro" id="IPR012337">
    <property type="entry name" value="RNaseH-like_sf"/>
</dbReference>
<dbReference type="InterPro" id="IPR036397">
    <property type="entry name" value="RNaseH_sf"/>
</dbReference>
<dbReference type="NCBIfam" id="TIGR01298">
    <property type="entry name" value="RNaseT"/>
    <property type="match status" value="1"/>
</dbReference>
<dbReference type="PANTHER" id="PTHR30231">
    <property type="entry name" value="DNA POLYMERASE III SUBUNIT EPSILON"/>
    <property type="match status" value="1"/>
</dbReference>
<dbReference type="PANTHER" id="PTHR30231:SF2">
    <property type="entry name" value="RIBONUCLEASE T"/>
    <property type="match status" value="1"/>
</dbReference>
<dbReference type="Pfam" id="PF00929">
    <property type="entry name" value="RNase_T"/>
    <property type="match status" value="1"/>
</dbReference>
<dbReference type="SMART" id="SM00479">
    <property type="entry name" value="EXOIII"/>
    <property type="match status" value="1"/>
</dbReference>
<dbReference type="SUPFAM" id="SSF53098">
    <property type="entry name" value="Ribonuclease H-like"/>
    <property type="match status" value="1"/>
</dbReference>
<keyword id="KW-0269">Exonuclease</keyword>
<keyword id="KW-0378">Hydrolase</keyword>
<keyword id="KW-0460">Magnesium</keyword>
<keyword id="KW-0479">Metal-binding</keyword>
<keyword id="KW-0540">Nuclease</keyword>
<keyword id="KW-1185">Reference proteome</keyword>
<keyword id="KW-0819">tRNA processing</keyword>
<reference key="1">
    <citation type="submission" date="2003-06" db="EMBL/GenBank/DDBJ databases">
        <title>The complete genome sequence of Haemophilus ducreyi.</title>
        <authorList>
            <person name="Munson R.S. Jr."/>
            <person name="Ray W.C."/>
            <person name="Mahairas G."/>
            <person name="Sabo P."/>
            <person name="Mungur R."/>
            <person name="Johnson L."/>
            <person name="Nguyen D."/>
            <person name="Wang J."/>
            <person name="Forst C."/>
            <person name="Hood L."/>
        </authorList>
    </citation>
    <scope>NUCLEOTIDE SEQUENCE [LARGE SCALE GENOMIC DNA]</scope>
    <source>
        <strain>35000HP / ATCC 700724</strain>
    </source>
</reference>
<evidence type="ECO:0000255" key="1">
    <source>
        <dbReference type="HAMAP-Rule" id="MF_00157"/>
    </source>
</evidence>
<gene>
    <name evidence="1" type="primary">rnt</name>
    <name type="ordered locus">HD_0611</name>
</gene>
<protein>
    <recommendedName>
        <fullName evidence="1">Ribonuclease T</fullName>
        <ecNumber evidence="1">3.1.13.-</ecNumber>
    </recommendedName>
    <alternativeName>
        <fullName evidence="1">Exoribonuclease T</fullName>
        <shortName evidence="1">RNase T</shortName>
    </alternativeName>
</protein>
<organism>
    <name type="scientific">Haemophilus ducreyi (strain 35000HP / ATCC 700724)</name>
    <dbReference type="NCBI Taxonomy" id="233412"/>
    <lineage>
        <taxon>Bacteria</taxon>
        <taxon>Pseudomonadati</taxon>
        <taxon>Pseudomonadota</taxon>
        <taxon>Gammaproteobacteria</taxon>
        <taxon>Pasteurellales</taxon>
        <taxon>Pasteurellaceae</taxon>
        <taxon>Haemophilus</taxon>
    </lineage>
</organism>
<name>RNT_HAEDU</name>
<sequence>MTEQVTDHNLLKHRFRGYLPVIIDVETAGLNAKTDALLELAAITVKMDQQGYLVPDQKCHFHIQPFENANINADSLKFNGIDIHNPLRGAVAEAIAIPEMFKMVRRAIKEQGCQRAVIVAHNATFDQAFLQAAVKRINAKRDPFHPFAMFDTASLAGLMYGQTVLVKACQIANIAFDGKQAHSALYDTEKTTELFCAMVNRLKDLGGFPLLNPK</sequence>
<comment type="function">
    <text evidence="1">Trims short 3' overhangs of a variety of RNA species, leaving a one or two nucleotide 3' overhang. Responsible for the end-turnover of tRNA: specifically removes the terminal AMP residue from uncharged tRNA (tRNA-C-C-A). Also appears to be involved in tRNA biosynthesis.</text>
</comment>
<comment type="cofactor">
    <cofactor evidence="1">
        <name>Mg(2+)</name>
        <dbReference type="ChEBI" id="CHEBI:18420"/>
    </cofactor>
    <text evidence="1">Binds two Mg(2+) per subunit. The active form of the enzyme binds two Mg(2+) ions in its active site. The first Mg(2+) forms only one salt bridge with the protein.</text>
</comment>
<comment type="subunit">
    <text evidence="1">Homodimer.</text>
</comment>
<comment type="similarity">
    <text evidence="1">Belongs to the RNase T family.</text>
</comment>